<organism>
    <name type="scientific">Salmonella typhimurium (strain LT2 / SGSC1412 / ATCC 700720)</name>
    <dbReference type="NCBI Taxonomy" id="99287"/>
    <lineage>
        <taxon>Bacteria</taxon>
        <taxon>Pseudomonadati</taxon>
        <taxon>Pseudomonadota</taxon>
        <taxon>Gammaproteobacteria</taxon>
        <taxon>Enterobacterales</taxon>
        <taxon>Enterobacteriaceae</taxon>
        <taxon>Salmonella</taxon>
    </lineage>
</organism>
<proteinExistence type="inferred from homology"/>
<name>RNPA_SALTY</name>
<dbReference type="EC" id="3.1.26.5" evidence="1"/>
<dbReference type="EMBL" id="AE006468">
    <property type="protein sequence ID" value="AAL22699.1"/>
    <property type="molecule type" value="Genomic_DNA"/>
</dbReference>
<dbReference type="RefSeq" id="NP_462740.1">
    <property type="nucleotide sequence ID" value="NC_003197.2"/>
</dbReference>
<dbReference type="RefSeq" id="WP_000239725.1">
    <property type="nucleotide sequence ID" value="NC_003197.2"/>
</dbReference>
<dbReference type="SMR" id="P66686"/>
<dbReference type="STRING" id="99287.STM3840"/>
<dbReference type="PaxDb" id="99287-STM3840"/>
<dbReference type="GeneID" id="1255367"/>
<dbReference type="GeneID" id="93035306"/>
<dbReference type="KEGG" id="stm:STM3840"/>
<dbReference type="PATRIC" id="fig|99287.12.peg.4067"/>
<dbReference type="HOGENOM" id="CLU_117179_11_0_6"/>
<dbReference type="OMA" id="LHQHELP"/>
<dbReference type="PhylomeDB" id="P66686"/>
<dbReference type="BioCyc" id="SENT99287:STM3840-MONOMER"/>
<dbReference type="Proteomes" id="UP000001014">
    <property type="component" value="Chromosome"/>
</dbReference>
<dbReference type="GO" id="GO:0030677">
    <property type="term" value="C:ribonuclease P complex"/>
    <property type="evidence" value="ECO:0000318"/>
    <property type="project" value="GO_Central"/>
</dbReference>
<dbReference type="GO" id="GO:0042781">
    <property type="term" value="F:3'-tRNA processing endoribonuclease activity"/>
    <property type="evidence" value="ECO:0000318"/>
    <property type="project" value="GO_Central"/>
</dbReference>
<dbReference type="GO" id="GO:0004526">
    <property type="term" value="F:ribonuclease P activity"/>
    <property type="evidence" value="ECO:0000318"/>
    <property type="project" value="GO_Central"/>
</dbReference>
<dbReference type="GO" id="GO:0000049">
    <property type="term" value="F:tRNA binding"/>
    <property type="evidence" value="ECO:0007669"/>
    <property type="project" value="UniProtKB-UniRule"/>
</dbReference>
<dbReference type="GO" id="GO:0042780">
    <property type="term" value="P:tRNA 3'-end processing"/>
    <property type="evidence" value="ECO:0000318"/>
    <property type="project" value="GO_Central"/>
</dbReference>
<dbReference type="GO" id="GO:0001682">
    <property type="term" value="P:tRNA 5'-leader removal"/>
    <property type="evidence" value="ECO:0007669"/>
    <property type="project" value="UniProtKB-UniRule"/>
</dbReference>
<dbReference type="FunFam" id="3.30.230.10:FF:000016">
    <property type="entry name" value="Ribonuclease P protein component"/>
    <property type="match status" value="1"/>
</dbReference>
<dbReference type="Gene3D" id="3.30.230.10">
    <property type="match status" value="1"/>
</dbReference>
<dbReference type="HAMAP" id="MF_00227">
    <property type="entry name" value="RNase_P"/>
    <property type="match status" value="1"/>
</dbReference>
<dbReference type="InterPro" id="IPR020568">
    <property type="entry name" value="Ribosomal_Su5_D2-typ_SF"/>
</dbReference>
<dbReference type="InterPro" id="IPR014721">
    <property type="entry name" value="Ribsml_uS5_D2-typ_fold_subgr"/>
</dbReference>
<dbReference type="InterPro" id="IPR000100">
    <property type="entry name" value="RNase_P"/>
</dbReference>
<dbReference type="InterPro" id="IPR020539">
    <property type="entry name" value="RNase_P_CS"/>
</dbReference>
<dbReference type="NCBIfam" id="TIGR00188">
    <property type="entry name" value="rnpA"/>
    <property type="match status" value="1"/>
</dbReference>
<dbReference type="PANTHER" id="PTHR33992">
    <property type="entry name" value="RIBONUCLEASE P PROTEIN COMPONENT"/>
    <property type="match status" value="1"/>
</dbReference>
<dbReference type="PANTHER" id="PTHR33992:SF1">
    <property type="entry name" value="RIBONUCLEASE P PROTEIN COMPONENT"/>
    <property type="match status" value="1"/>
</dbReference>
<dbReference type="Pfam" id="PF00825">
    <property type="entry name" value="Ribonuclease_P"/>
    <property type="match status" value="1"/>
</dbReference>
<dbReference type="SUPFAM" id="SSF54211">
    <property type="entry name" value="Ribosomal protein S5 domain 2-like"/>
    <property type="match status" value="1"/>
</dbReference>
<dbReference type="PROSITE" id="PS00648">
    <property type="entry name" value="RIBONUCLEASE_P"/>
    <property type="match status" value="1"/>
</dbReference>
<sequence length="119" mass="13782">MVKLAFPRELRLLTPAHFTFVFQQPQRAGTPQITILGRLNSLGHPRIGLTVAKKNVRRAHERNRIKRLTRESFRLRQHELPAMDFVVVAKKGVADLDNRALSEALEKLWRRHCRLARGS</sequence>
<comment type="function">
    <text evidence="1">RNaseP catalyzes the removal of the 5'-leader sequence from pre-tRNA to produce the mature 5'-terminus. It can also cleave other RNA substrates such as 4.5S RNA. The protein component plays an auxiliary but essential role in vivo by binding to the 5'-leader sequence and broadening the substrate specificity of the ribozyme.</text>
</comment>
<comment type="catalytic activity">
    <reaction evidence="1">
        <text>Endonucleolytic cleavage of RNA, removing 5'-extranucleotides from tRNA precursor.</text>
        <dbReference type="EC" id="3.1.26.5"/>
    </reaction>
</comment>
<comment type="subunit">
    <text evidence="1">Consists of a catalytic RNA component (M1 or rnpB) and a protein subunit.</text>
</comment>
<comment type="similarity">
    <text evidence="1">Belongs to the RnpA family.</text>
</comment>
<feature type="chain" id="PRO_0000198521" description="Ribonuclease P protein component">
    <location>
        <begin position="1"/>
        <end position="119"/>
    </location>
</feature>
<accession>P66686</accession>
<accession>Q8XEW2</accession>
<gene>
    <name evidence="1" type="primary">rnpA</name>
    <name type="ordered locus">STM3840</name>
</gene>
<protein>
    <recommendedName>
        <fullName evidence="1">Ribonuclease P protein component</fullName>
        <shortName evidence="1">RNase P protein</shortName>
        <shortName evidence="1">RNaseP protein</shortName>
        <ecNumber evidence="1">3.1.26.5</ecNumber>
    </recommendedName>
    <alternativeName>
        <fullName evidence="1">Protein C5</fullName>
    </alternativeName>
</protein>
<keyword id="KW-0255">Endonuclease</keyword>
<keyword id="KW-0378">Hydrolase</keyword>
<keyword id="KW-0540">Nuclease</keyword>
<keyword id="KW-1185">Reference proteome</keyword>
<keyword id="KW-0694">RNA-binding</keyword>
<keyword id="KW-0819">tRNA processing</keyword>
<evidence type="ECO:0000255" key="1">
    <source>
        <dbReference type="HAMAP-Rule" id="MF_00227"/>
    </source>
</evidence>
<reference key="1">
    <citation type="journal article" date="2001" name="Nature">
        <title>Complete genome sequence of Salmonella enterica serovar Typhimurium LT2.</title>
        <authorList>
            <person name="McClelland M."/>
            <person name="Sanderson K.E."/>
            <person name="Spieth J."/>
            <person name="Clifton S.W."/>
            <person name="Latreille P."/>
            <person name="Courtney L."/>
            <person name="Porwollik S."/>
            <person name="Ali J."/>
            <person name="Dante M."/>
            <person name="Du F."/>
            <person name="Hou S."/>
            <person name="Layman D."/>
            <person name="Leonard S."/>
            <person name="Nguyen C."/>
            <person name="Scott K."/>
            <person name="Holmes A."/>
            <person name="Grewal N."/>
            <person name="Mulvaney E."/>
            <person name="Ryan E."/>
            <person name="Sun H."/>
            <person name="Florea L."/>
            <person name="Miller W."/>
            <person name="Stoneking T."/>
            <person name="Nhan M."/>
            <person name="Waterston R."/>
            <person name="Wilson R.K."/>
        </authorList>
    </citation>
    <scope>NUCLEOTIDE SEQUENCE [LARGE SCALE GENOMIC DNA]</scope>
    <source>
        <strain>LT2 / SGSC1412 / ATCC 700720</strain>
    </source>
</reference>